<comment type="function">
    <text evidence="3">Polycomb group (Pc-G) genes are needed to maintain expression patterns of the homeotic selector genes of the Antennapedia (Antp-C) and Bithorax (Bx-C) complexes, and hence for the maintenance of segmental determination. Can act as a modifier of position effect variegation (PEV).</text>
</comment>
<comment type="subcellular location">
    <subcellularLocation>
        <location evidence="3">Nucleus</location>
    </subcellularLocation>
    <text>During S-phase in early embryogenesis. Colocalizes with PCNA in polytene nuclei during embryogenesis.</text>
</comment>
<comment type="tissue specificity">
    <text evidence="3">Ubiquitously expressed throughout embryonic development. High expression is detected in CNS and gonads.</text>
</comment>
<comment type="developmental stage">
    <text evidence="3">Expressed both maternally and zygotically.</text>
</comment>
<comment type="similarity">
    <text evidence="4">Belongs to the cramped family.</text>
</comment>
<comment type="sequence caution" evidence="4">
    <conflict type="frameshift">
        <sequence resource="EMBL-CDS" id="CAB55550"/>
    </conflict>
</comment>
<feature type="chain" id="PRO_0000197138" description="Protein cramped">
    <location>
        <begin position="1"/>
        <end position="982"/>
    </location>
</feature>
<feature type="domain" description="SANT">
    <location>
        <begin position="109"/>
        <end position="173"/>
    </location>
</feature>
<feature type="region of interest" description="Disordered" evidence="1">
    <location>
        <begin position="1"/>
        <end position="37"/>
    </location>
</feature>
<feature type="region of interest" description="Disordered" evidence="1">
    <location>
        <begin position="71"/>
        <end position="111"/>
    </location>
</feature>
<feature type="region of interest" description="Disordered" evidence="1">
    <location>
        <begin position="323"/>
        <end position="349"/>
    </location>
</feature>
<feature type="region of interest" description="Disordered" evidence="1">
    <location>
        <begin position="407"/>
        <end position="456"/>
    </location>
</feature>
<feature type="region of interest" description="Disordered" evidence="1">
    <location>
        <begin position="822"/>
        <end position="851"/>
    </location>
</feature>
<feature type="compositionally biased region" description="Pro residues" evidence="1">
    <location>
        <begin position="7"/>
        <end position="20"/>
    </location>
</feature>
<feature type="compositionally biased region" description="Low complexity" evidence="1">
    <location>
        <begin position="21"/>
        <end position="30"/>
    </location>
</feature>
<feature type="compositionally biased region" description="Basic and acidic residues" evidence="1">
    <location>
        <begin position="86"/>
        <end position="98"/>
    </location>
</feature>
<feature type="compositionally biased region" description="Polar residues" evidence="1">
    <location>
        <begin position="100"/>
        <end position="111"/>
    </location>
</feature>
<feature type="compositionally biased region" description="Basic and acidic residues" evidence="1">
    <location>
        <begin position="410"/>
        <end position="425"/>
    </location>
</feature>
<feature type="compositionally biased region" description="Low complexity" evidence="1">
    <location>
        <begin position="822"/>
        <end position="833"/>
    </location>
</feature>
<feature type="modified residue" description="Phosphoserine" evidence="2">
    <location>
        <position position="431"/>
    </location>
</feature>
<feature type="modified residue" description="Phosphoserine" evidence="2">
    <location>
        <position position="437"/>
    </location>
</feature>
<feature type="sequence variant" description="In strain: k3 and k5.">
    <original>S</original>
    <variation>N</variation>
    <location>
        <position position="322"/>
    </location>
</feature>
<feature type="sequence variant" description="In strain: k5.">
    <original>M</original>
    <variation>I</variation>
    <location>
        <position position="402"/>
    </location>
</feature>
<feature type="sequence variant" description="In strain: Berkeley, k1, k8, Oregon-R, pe7 and pe10.">
    <original>N</original>
    <variation>T</variation>
    <location>
        <position position="493"/>
    </location>
</feature>
<feature type="sequence variant" description="In strain: k2.">
    <original>S</original>
    <variation>T</variation>
    <location>
        <position position="527"/>
    </location>
</feature>
<feature type="sequence variant" description="In strain: Berkeley, k1, k2, k3, k5, k8, k9 and k11.">
    <original>G</original>
    <variation>A</variation>
    <location>
        <position position="639"/>
    </location>
</feature>
<feature type="sequence variant" description="In strain: k5.">
    <original>M</original>
    <variation>I</variation>
    <location>
        <position position="747"/>
    </location>
</feature>
<feature type="sequence variant" description="In strain: Berkeley, k9, wi10 and wi19.">
    <original>T</original>
    <variation>I</variation>
    <location>
        <position position="823"/>
    </location>
</feature>
<feature type="sequence variant" description="In strain: k1.">
    <original>T</original>
    <variation>S</variation>
    <location>
        <position position="830"/>
    </location>
</feature>
<feature type="sequence variant" description="In strain: Berkeley, k3, k8, k9, wi10 and wi19.">
    <original>C</original>
    <variation>S</variation>
    <location>
        <position position="837"/>
    </location>
</feature>
<feature type="sequence variant" description="In strain: Berkeley, k1, k2, k3, k5, k8, k9, k11, pe1, pe4, pe45, pe5, wi4, wi7, wi10, wi13, wi18 and wi19.">
    <original>M</original>
    <variation>T</variation>
    <location>
        <position position="842"/>
    </location>
</feature>
<feature type="sequence variant" description="In strain: k8.">
    <original>S</original>
    <variation>P</variation>
    <location>
        <position position="845"/>
    </location>
</feature>
<feature type="sequence conflict" description="In Ref. 1; CAB55550, 2; AAN04260/AAN04261/AAN04262/AAN04263/AAN04264/AAN04265/AAN04266/AAN04267/AAN04268/AAN04269/AAN04270/AAN04271/AAN04272/AAN04273/AAN04274/AAN04275/AAN04276/AAN04277/AAN04278/AAN04279/AAN04280/AAN04281/AAN04282/AAN04283/AAN04284/AAN04285/AAN04286/AAN04287/AAN04288/AAN04289/AAN04290/AAN04291/AAN04292/AAN04293 and 5; CAA16818." evidence="4" ref="1 2 5">
    <original>A</original>
    <variation>S</variation>
    <location>
        <position position="645"/>
    </location>
</feature>
<feature type="sequence conflict" description="In Ref. 1; CAB55550, 2; AAN04260/AAN04261/AAN04262/AAN04263/AAN04264/AAN04265/AAN04266/AAN04267/AAN04268/AAN04269/AAN04270/AAN04271/AAN04272/AAN04273/AAN04274/AAN04275/AAN04276/AAN04277/AAN04278/AAN04279/AAN04280/AAN04281/AAN04282/AAN04283/AAN04284/AAN04285/AAN04286/AAN04287/AAN04288/AAN04289/AAN04290/AAN04291/AAN04292/AAN04293 and 5; CAA16818." evidence="4" ref="1 2 5">
    <original>G</original>
    <variation>S</variation>
    <location>
        <position position="653"/>
    </location>
</feature>
<feature type="sequence conflict" description="In Ref. 1; CAB55550." evidence="4" ref="1">
    <original>F</original>
    <variation>L</variation>
    <location>
        <position position="965"/>
    </location>
</feature>
<proteinExistence type="evidence at protein level"/>
<gene>
    <name type="primary">crm</name>
    <name type="ORF">CG2714</name>
</gene>
<name>CRM_DROME</name>
<reference key="1">
    <citation type="journal article" date="1997" name="Development">
        <title>The cramped gene of Drosophila is a member of the polycomb-group, and interacts with mus209, the gene encoding proliferating cell nuclear antigen.</title>
        <authorList>
            <person name="Yamamoto Y."/>
            <person name="Girard F."/>
            <person name="Bello B."/>
            <person name="Affolter M."/>
            <person name="Gehring W.J."/>
        </authorList>
    </citation>
    <scope>NUCLEOTIDE SEQUENCE [MRNA]</scope>
    <scope>FUNCTION</scope>
    <scope>SUBCELLULAR LOCATION</scope>
    <scope>TISSUE SPECIFICITY</scope>
    <scope>DEVELOPMENTAL STAGE</scope>
    <source>
        <strain>Oregon-R</strain>
        <tissue>Embryo</tissue>
    </source>
</reference>
<reference key="2">
    <citation type="journal article" date="2002" name="Proc. Natl. Acad. Sci. U.S.A.">
        <title>Hitchhiking mapping: a population-based fine-mapping strategy for adaptive mutations in Drosophilamelanogaster.</title>
        <authorList>
            <person name="Harr B."/>
            <person name="Kauer M."/>
            <person name="Schloetterer C."/>
        </authorList>
    </citation>
    <scope>NUCLEOTIDE SEQUENCE [GENOMIC DNA]</scope>
    <source>
        <strain>k1</strain>
        <strain>k11</strain>
        <strain>k2</strain>
        <strain>k3</strain>
        <strain>k5</strain>
        <strain>k8</strain>
        <strain>k9</strain>
        <strain>pe1</strain>
        <strain>pe10</strain>
        <strain>pe12</strain>
        <strain>pe2</strain>
        <strain>pe29</strain>
        <strain>pe33</strain>
        <strain>pe4</strain>
        <strain>pe45</strain>
        <strain>pe46</strain>
        <strain>pe7</strain>
        <strain>pe9</strain>
        <strain>wi1</strain>
        <strain>wi10</strain>
        <strain>wi12</strain>
        <strain>wi13</strain>
        <strain>wi14</strain>
        <strain>wi16</strain>
        <strain>wi18</strain>
        <strain>wi19</strain>
        <strain>wi2</strain>
        <strain>wi27</strain>
        <strain>wi28</strain>
        <strain>wi4</strain>
        <strain>wi5</strain>
        <strain>wi7</strain>
        <strain>wi8</strain>
    </source>
</reference>
<reference key="3">
    <citation type="journal article" date="2000" name="Science">
        <title>The genome sequence of Drosophila melanogaster.</title>
        <authorList>
            <person name="Adams M.D."/>
            <person name="Celniker S.E."/>
            <person name="Holt R.A."/>
            <person name="Evans C.A."/>
            <person name="Gocayne J.D."/>
            <person name="Amanatides P.G."/>
            <person name="Scherer S.E."/>
            <person name="Li P.W."/>
            <person name="Hoskins R.A."/>
            <person name="Galle R.F."/>
            <person name="George R.A."/>
            <person name="Lewis S.E."/>
            <person name="Richards S."/>
            <person name="Ashburner M."/>
            <person name="Henderson S.N."/>
            <person name="Sutton G.G."/>
            <person name="Wortman J.R."/>
            <person name="Yandell M.D."/>
            <person name="Zhang Q."/>
            <person name="Chen L.X."/>
            <person name="Brandon R.C."/>
            <person name="Rogers Y.-H.C."/>
            <person name="Blazej R.G."/>
            <person name="Champe M."/>
            <person name="Pfeiffer B.D."/>
            <person name="Wan K.H."/>
            <person name="Doyle C."/>
            <person name="Baxter E.G."/>
            <person name="Helt G."/>
            <person name="Nelson C.R."/>
            <person name="Miklos G.L.G."/>
            <person name="Abril J.F."/>
            <person name="Agbayani A."/>
            <person name="An H.-J."/>
            <person name="Andrews-Pfannkoch C."/>
            <person name="Baldwin D."/>
            <person name="Ballew R.M."/>
            <person name="Basu A."/>
            <person name="Baxendale J."/>
            <person name="Bayraktaroglu L."/>
            <person name="Beasley E.M."/>
            <person name="Beeson K.Y."/>
            <person name="Benos P.V."/>
            <person name="Berman B.P."/>
            <person name="Bhandari D."/>
            <person name="Bolshakov S."/>
            <person name="Borkova D."/>
            <person name="Botchan M.R."/>
            <person name="Bouck J."/>
            <person name="Brokstein P."/>
            <person name="Brottier P."/>
            <person name="Burtis K.C."/>
            <person name="Busam D.A."/>
            <person name="Butler H."/>
            <person name="Cadieu E."/>
            <person name="Center A."/>
            <person name="Chandra I."/>
            <person name="Cherry J.M."/>
            <person name="Cawley S."/>
            <person name="Dahlke C."/>
            <person name="Davenport L.B."/>
            <person name="Davies P."/>
            <person name="de Pablos B."/>
            <person name="Delcher A."/>
            <person name="Deng Z."/>
            <person name="Mays A.D."/>
            <person name="Dew I."/>
            <person name="Dietz S.M."/>
            <person name="Dodson K."/>
            <person name="Doup L.E."/>
            <person name="Downes M."/>
            <person name="Dugan-Rocha S."/>
            <person name="Dunkov B.C."/>
            <person name="Dunn P."/>
            <person name="Durbin K.J."/>
            <person name="Evangelista C.C."/>
            <person name="Ferraz C."/>
            <person name="Ferriera S."/>
            <person name="Fleischmann W."/>
            <person name="Fosler C."/>
            <person name="Gabrielian A.E."/>
            <person name="Garg N.S."/>
            <person name="Gelbart W.M."/>
            <person name="Glasser K."/>
            <person name="Glodek A."/>
            <person name="Gong F."/>
            <person name="Gorrell J.H."/>
            <person name="Gu Z."/>
            <person name="Guan P."/>
            <person name="Harris M."/>
            <person name="Harris N.L."/>
            <person name="Harvey D.A."/>
            <person name="Heiman T.J."/>
            <person name="Hernandez J.R."/>
            <person name="Houck J."/>
            <person name="Hostin D."/>
            <person name="Houston K.A."/>
            <person name="Howland T.J."/>
            <person name="Wei M.-H."/>
            <person name="Ibegwam C."/>
            <person name="Jalali M."/>
            <person name="Kalush F."/>
            <person name="Karpen G.H."/>
            <person name="Ke Z."/>
            <person name="Kennison J.A."/>
            <person name="Ketchum K.A."/>
            <person name="Kimmel B.E."/>
            <person name="Kodira C.D."/>
            <person name="Kraft C.L."/>
            <person name="Kravitz S."/>
            <person name="Kulp D."/>
            <person name="Lai Z."/>
            <person name="Lasko P."/>
            <person name="Lei Y."/>
            <person name="Levitsky A.A."/>
            <person name="Li J.H."/>
            <person name="Li Z."/>
            <person name="Liang Y."/>
            <person name="Lin X."/>
            <person name="Liu X."/>
            <person name="Mattei B."/>
            <person name="McIntosh T.C."/>
            <person name="McLeod M.P."/>
            <person name="McPherson D."/>
            <person name="Merkulov G."/>
            <person name="Milshina N.V."/>
            <person name="Mobarry C."/>
            <person name="Morris J."/>
            <person name="Moshrefi A."/>
            <person name="Mount S.M."/>
            <person name="Moy M."/>
            <person name="Murphy B."/>
            <person name="Murphy L."/>
            <person name="Muzny D.M."/>
            <person name="Nelson D.L."/>
            <person name="Nelson D.R."/>
            <person name="Nelson K.A."/>
            <person name="Nixon K."/>
            <person name="Nusskern D.R."/>
            <person name="Pacleb J.M."/>
            <person name="Palazzolo M."/>
            <person name="Pittman G.S."/>
            <person name="Pan S."/>
            <person name="Pollard J."/>
            <person name="Puri V."/>
            <person name="Reese M.G."/>
            <person name="Reinert K."/>
            <person name="Remington K."/>
            <person name="Saunders R.D.C."/>
            <person name="Scheeler F."/>
            <person name="Shen H."/>
            <person name="Shue B.C."/>
            <person name="Siden-Kiamos I."/>
            <person name="Simpson M."/>
            <person name="Skupski M.P."/>
            <person name="Smith T.J."/>
            <person name="Spier E."/>
            <person name="Spradling A.C."/>
            <person name="Stapleton M."/>
            <person name="Strong R."/>
            <person name="Sun E."/>
            <person name="Svirskas R."/>
            <person name="Tector C."/>
            <person name="Turner R."/>
            <person name="Venter E."/>
            <person name="Wang A.H."/>
            <person name="Wang X."/>
            <person name="Wang Z.-Y."/>
            <person name="Wassarman D.A."/>
            <person name="Weinstock G.M."/>
            <person name="Weissenbach J."/>
            <person name="Williams S.M."/>
            <person name="Woodage T."/>
            <person name="Worley K.C."/>
            <person name="Wu D."/>
            <person name="Yang S."/>
            <person name="Yao Q.A."/>
            <person name="Ye J."/>
            <person name="Yeh R.-F."/>
            <person name="Zaveri J.S."/>
            <person name="Zhan M."/>
            <person name="Zhang G."/>
            <person name="Zhao Q."/>
            <person name="Zheng L."/>
            <person name="Zheng X.H."/>
            <person name="Zhong F.N."/>
            <person name="Zhong W."/>
            <person name="Zhou X."/>
            <person name="Zhu S.C."/>
            <person name="Zhu X."/>
            <person name="Smith H.O."/>
            <person name="Gibbs R.A."/>
            <person name="Myers E.W."/>
            <person name="Rubin G.M."/>
            <person name="Venter J.C."/>
        </authorList>
    </citation>
    <scope>NUCLEOTIDE SEQUENCE [LARGE SCALE GENOMIC DNA]</scope>
    <source>
        <strain>Berkeley</strain>
    </source>
</reference>
<reference key="4">
    <citation type="journal article" date="2002" name="Genome Biol.">
        <title>Annotation of the Drosophila melanogaster euchromatic genome: a systematic review.</title>
        <authorList>
            <person name="Misra S."/>
            <person name="Crosby M.A."/>
            <person name="Mungall C.J."/>
            <person name="Matthews B.B."/>
            <person name="Campbell K.S."/>
            <person name="Hradecky P."/>
            <person name="Huang Y."/>
            <person name="Kaminker J.S."/>
            <person name="Millburn G.H."/>
            <person name="Prochnik S.E."/>
            <person name="Smith C.D."/>
            <person name="Tupy J.L."/>
            <person name="Whitfield E.J."/>
            <person name="Bayraktaroglu L."/>
            <person name="Berman B.P."/>
            <person name="Bettencourt B.R."/>
            <person name="Celniker S.E."/>
            <person name="de Grey A.D.N.J."/>
            <person name="Drysdale R.A."/>
            <person name="Harris N.L."/>
            <person name="Richter J."/>
            <person name="Russo S."/>
            <person name="Schroeder A.J."/>
            <person name="Shu S.Q."/>
            <person name="Stapleton M."/>
            <person name="Yamada C."/>
            <person name="Ashburner M."/>
            <person name="Gelbart W.M."/>
            <person name="Rubin G.M."/>
            <person name="Lewis S.E."/>
        </authorList>
    </citation>
    <scope>GENOME REANNOTATION</scope>
    <source>
        <strain>Berkeley</strain>
    </source>
</reference>
<reference key="5">
    <citation type="journal article" date="2000" name="Science">
        <title>From sequence to chromosome: the tip of the X chromosome of D. melanogaster.</title>
        <authorList>
            <person name="Benos P.V."/>
            <person name="Gatt M.K."/>
            <person name="Ashburner M."/>
            <person name="Murphy L."/>
            <person name="Harris D."/>
            <person name="Barrell B.G."/>
            <person name="Ferraz C."/>
            <person name="Vidal S."/>
            <person name="Brun C."/>
            <person name="Demailles J."/>
            <person name="Cadieu E."/>
            <person name="Dreano S."/>
            <person name="Gloux S."/>
            <person name="Lelaure V."/>
            <person name="Mottier S."/>
            <person name="Galibert F."/>
            <person name="Borkova D."/>
            <person name="Minana B."/>
            <person name="Kafatos F.C."/>
            <person name="Louis C."/>
            <person name="Siden-Kiamos I."/>
            <person name="Bolshakov S."/>
            <person name="Papagiannakis G."/>
            <person name="Spanos L."/>
            <person name="Cox S."/>
            <person name="Madueno E."/>
            <person name="de Pablos B."/>
            <person name="Modolell J."/>
            <person name="Peter A."/>
            <person name="Schoettler P."/>
            <person name="Werner M."/>
            <person name="Mourkioti F."/>
            <person name="Beinert N."/>
            <person name="Dowe G."/>
            <person name="Schaefer U."/>
            <person name="Jaeckle H."/>
            <person name="Bucheton A."/>
            <person name="Callister D.M."/>
            <person name="Campbell L.A."/>
            <person name="Darlamitsou A."/>
            <person name="Henderson N.S."/>
            <person name="McMillan P.J."/>
            <person name="Salles C."/>
            <person name="Tait E.A."/>
            <person name="Valenti P."/>
            <person name="Saunders R.D.C."/>
            <person name="Glover D.M."/>
        </authorList>
    </citation>
    <scope>NUCLEOTIDE SEQUENCE [LARGE SCALE GENOMIC DNA]</scope>
    <source>
        <strain>Oregon-R</strain>
    </source>
</reference>
<reference key="6">
    <citation type="journal article" date="2002" name="Genome Biol.">
        <title>A Drosophila full-length cDNA resource.</title>
        <authorList>
            <person name="Stapleton M."/>
            <person name="Carlson J.W."/>
            <person name="Brokstein P."/>
            <person name="Yu C."/>
            <person name="Champe M."/>
            <person name="George R.A."/>
            <person name="Guarin H."/>
            <person name="Kronmiller B."/>
            <person name="Pacleb J.M."/>
            <person name="Park S."/>
            <person name="Wan K.H."/>
            <person name="Rubin G.M."/>
            <person name="Celniker S.E."/>
        </authorList>
    </citation>
    <scope>NUCLEOTIDE SEQUENCE [LARGE SCALE MRNA]</scope>
    <source>
        <strain>Berkeley</strain>
        <tissue>Embryo</tissue>
    </source>
</reference>
<reference key="7">
    <citation type="journal article" date="2008" name="J. Proteome Res.">
        <title>Phosphoproteome analysis of Drosophila melanogaster embryos.</title>
        <authorList>
            <person name="Zhai B."/>
            <person name="Villen J."/>
            <person name="Beausoleil S.A."/>
            <person name="Mintseris J."/>
            <person name="Gygi S.P."/>
        </authorList>
    </citation>
    <scope>PHOSPHORYLATION [LARGE SCALE ANALYSIS] AT SER-431 AND SER-437</scope>
    <scope>IDENTIFICATION BY MASS SPECTROMETRY</scope>
    <source>
        <tissue>Embryo</tissue>
    </source>
</reference>
<organism>
    <name type="scientific">Drosophila melanogaster</name>
    <name type="common">Fruit fly</name>
    <dbReference type="NCBI Taxonomy" id="7227"/>
    <lineage>
        <taxon>Eukaryota</taxon>
        <taxon>Metazoa</taxon>
        <taxon>Ecdysozoa</taxon>
        <taxon>Arthropoda</taxon>
        <taxon>Hexapoda</taxon>
        <taxon>Insecta</taxon>
        <taxon>Pterygota</taxon>
        <taxon>Neoptera</taxon>
        <taxon>Endopterygota</taxon>
        <taxon>Diptera</taxon>
        <taxon>Brachycera</taxon>
        <taxon>Muscomorpha</taxon>
        <taxon>Ephydroidea</taxon>
        <taxon>Drosophilidae</taxon>
        <taxon>Drosophila</taxon>
        <taxon>Sophophora</taxon>
    </lineage>
</organism>
<protein>
    <recommendedName>
        <fullName>Protein cramped</fullName>
    </recommendedName>
</protein>
<sequence length="982" mass="107416">MEELSKQPPPPPLTQPPPPSSSVSIEEPLPNGKGGGAVVVNSIAKLPEEELLGSVTMHNCPGTRASARVIQKMKQDQTRPMTPPPSEREPNKKEEKAAQKTPSQLKTGSGKTTWTNVERNCFFDALNEFGKDFEAVANCINAKLKRRNANSDYSFKTKDQVRQHYYQTHHKICKYVRFSEELKKPAQELYTLINYGEMRRKLQFLTEKHFMKLKQLVYQGQITVRCKGKNIRIKTPSCKALRRLNQLDDSLEDIRLPSKVEVLVTPANMEAFGRVQSLAQNPRGRIIVPLHKKLISFIKTFEYKWRSANQRLHEEKSAYFSSSLPSAASNNNNNNNETEPLQPSVASLDPSMCFQPRPGVAIHRPLLSITAYLSSISICLTAYEERMGFKVRSETLGNLAGMSVAANKRLRTESGSEKRSPETKKPKSSASPPLEKSLDDGPLEGNLMKMENSSGDELGEEIHEFLGDILEAMQHPQAATIPALSATTGDTTNVAVALETSHDPVQQAYPANADLSNAMATSVLQTSCAAAPAPSTPVTGSLAAPSVARSKRKEAKEAAAAAQARNFKPLLSDDILKRIRKGWTQANAADITIGDLYVVFGQDSKLELEYYWCEVDSSTAMASSILTINTVTPSSSSVGTQTGSAASNANQTGASSNCYVSASSNSSTSSTSLPYNPNDCDSVERVRAVTTSSVSNKLKHLLLVANLSERVRKRQCNCGHTCDRKRDLMTKAQQLAEATATGGVGGMVEGNFRTPMLPVRRPISNIDPVRQLSALTRQKISRQVLVQRRLLPPTSAGDRPYDLLSVRQLHSGLFEPIDRVDGTSSAGISTSGSKPDCSMNAMTASQDQEPGDQGALEFLNDEATQVSARDMPNLDICVATNRTDVSSSLNEAAQDGSTTQSFFQGSMSPMHLLRDSTSNARWLEDNINDFSLTSLLGHLDEIDATRDILDPSSSMSVISESSVDFRHKFQEIAALLQQQEKD</sequence>
<dbReference type="EMBL" id="Y13674">
    <property type="protein sequence ID" value="CAB55550.1"/>
    <property type="status" value="ALT_FRAME"/>
    <property type="molecule type" value="mRNA"/>
</dbReference>
<dbReference type="EMBL" id="AF365364">
    <property type="protein sequence ID" value="AAN04260.1"/>
    <property type="molecule type" value="Genomic_DNA"/>
</dbReference>
<dbReference type="EMBL" id="AF365365">
    <property type="protein sequence ID" value="AAN04261.1"/>
    <property type="molecule type" value="Genomic_DNA"/>
</dbReference>
<dbReference type="EMBL" id="AF365366">
    <property type="protein sequence ID" value="AAN04262.1"/>
    <property type="molecule type" value="Genomic_DNA"/>
</dbReference>
<dbReference type="EMBL" id="AF365367">
    <property type="protein sequence ID" value="AAN04263.1"/>
    <property type="molecule type" value="Genomic_DNA"/>
</dbReference>
<dbReference type="EMBL" id="AF365368">
    <property type="protein sequence ID" value="AAN04264.1"/>
    <property type="molecule type" value="Genomic_DNA"/>
</dbReference>
<dbReference type="EMBL" id="AF365369">
    <property type="protein sequence ID" value="AAN04265.1"/>
    <property type="molecule type" value="Genomic_DNA"/>
</dbReference>
<dbReference type="EMBL" id="AF365370">
    <property type="protein sequence ID" value="AAN04266.1"/>
    <property type="molecule type" value="Genomic_DNA"/>
</dbReference>
<dbReference type="EMBL" id="AF365371">
    <property type="protein sequence ID" value="AAN04267.1"/>
    <property type="molecule type" value="Genomic_DNA"/>
</dbReference>
<dbReference type="EMBL" id="AF365372">
    <property type="protein sequence ID" value="AAN04268.1"/>
    <property type="molecule type" value="Genomic_DNA"/>
</dbReference>
<dbReference type="EMBL" id="AF365373">
    <property type="protein sequence ID" value="AAN04269.1"/>
    <property type="molecule type" value="Genomic_DNA"/>
</dbReference>
<dbReference type="EMBL" id="AF365374">
    <property type="protein sequence ID" value="AAN04270.1"/>
    <property type="molecule type" value="Genomic_DNA"/>
</dbReference>
<dbReference type="EMBL" id="AF365375">
    <property type="protein sequence ID" value="AAN04271.1"/>
    <property type="molecule type" value="Genomic_DNA"/>
</dbReference>
<dbReference type="EMBL" id="AF365376">
    <property type="protein sequence ID" value="AAN04272.1"/>
    <property type="molecule type" value="Genomic_DNA"/>
</dbReference>
<dbReference type="EMBL" id="AF365377">
    <property type="protein sequence ID" value="AAN04273.1"/>
    <property type="molecule type" value="Genomic_DNA"/>
</dbReference>
<dbReference type="EMBL" id="AF365378">
    <property type="protein sequence ID" value="AAN04274.1"/>
    <property type="molecule type" value="Genomic_DNA"/>
</dbReference>
<dbReference type="EMBL" id="AF365379">
    <property type="protein sequence ID" value="AAN04275.1"/>
    <property type="molecule type" value="Genomic_DNA"/>
</dbReference>
<dbReference type="EMBL" id="AF365380">
    <property type="protein sequence ID" value="AAN04276.1"/>
    <property type="molecule type" value="Genomic_DNA"/>
</dbReference>
<dbReference type="EMBL" id="AF365381">
    <property type="protein sequence ID" value="AAN04277.1"/>
    <property type="molecule type" value="Genomic_DNA"/>
</dbReference>
<dbReference type="EMBL" id="AF365382">
    <property type="protein sequence ID" value="AAN04278.1"/>
    <property type="molecule type" value="Genomic_DNA"/>
</dbReference>
<dbReference type="EMBL" id="AF365383">
    <property type="protein sequence ID" value="AAN04279.1"/>
    <property type="molecule type" value="Genomic_DNA"/>
</dbReference>
<dbReference type="EMBL" id="AF365384">
    <property type="protein sequence ID" value="AAN04280.1"/>
    <property type="molecule type" value="Genomic_DNA"/>
</dbReference>
<dbReference type="EMBL" id="AF365385">
    <property type="protein sequence ID" value="AAN04281.1"/>
    <property type="molecule type" value="Genomic_DNA"/>
</dbReference>
<dbReference type="EMBL" id="AF365386">
    <property type="protein sequence ID" value="AAN04282.1"/>
    <property type="molecule type" value="Genomic_DNA"/>
</dbReference>
<dbReference type="EMBL" id="AF365387">
    <property type="protein sequence ID" value="AAN04283.1"/>
    <property type="molecule type" value="Genomic_DNA"/>
</dbReference>
<dbReference type="EMBL" id="AF365388">
    <property type="protein sequence ID" value="AAN04284.1"/>
    <property type="molecule type" value="Genomic_DNA"/>
</dbReference>
<dbReference type="EMBL" id="AF365389">
    <property type="protein sequence ID" value="AAN04285.1"/>
    <property type="molecule type" value="Genomic_DNA"/>
</dbReference>
<dbReference type="EMBL" id="AF365390">
    <property type="protein sequence ID" value="AAN04286.1"/>
    <property type="molecule type" value="Genomic_DNA"/>
</dbReference>
<dbReference type="EMBL" id="AF365391">
    <property type="protein sequence ID" value="AAN04287.1"/>
    <property type="molecule type" value="Genomic_DNA"/>
</dbReference>
<dbReference type="EMBL" id="AF365392">
    <property type="protein sequence ID" value="AAN04288.1"/>
    <property type="molecule type" value="Genomic_DNA"/>
</dbReference>
<dbReference type="EMBL" id="AF365393">
    <property type="protein sequence ID" value="AAN04289.1"/>
    <property type="molecule type" value="Genomic_DNA"/>
</dbReference>
<dbReference type="EMBL" id="AF365394">
    <property type="protein sequence ID" value="AAN04290.1"/>
    <property type="molecule type" value="Genomic_DNA"/>
</dbReference>
<dbReference type="EMBL" id="AF365396">
    <property type="protein sequence ID" value="AAN04291.1"/>
    <property type="molecule type" value="Genomic_DNA"/>
</dbReference>
<dbReference type="EMBL" id="AF365397">
    <property type="protein sequence ID" value="AAN04292.1"/>
    <property type="molecule type" value="Genomic_DNA"/>
</dbReference>
<dbReference type="EMBL" id="AF365398">
    <property type="protein sequence ID" value="AAN04293.1"/>
    <property type="molecule type" value="Genomic_DNA"/>
</dbReference>
<dbReference type="EMBL" id="AE014298">
    <property type="protein sequence ID" value="AAG22402.1"/>
    <property type="molecule type" value="Genomic_DNA"/>
</dbReference>
<dbReference type="EMBL" id="AL021728">
    <property type="protein sequence ID" value="CAA16818.1"/>
    <property type="molecule type" value="Genomic_DNA"/>
</dbReference>
<dbReference type="EMBL" id="AY051767">
    <property type="protein sequence ID" value="AAK93191.1"/>
    <property type="molecule type" value="mRNA"/>
</dbReference>
<dbReference type="PIR" id="T13653">
    <property type="entry name" value="T13653"/>
</dbReference>
<dbReference type="RefSeq" id="NP_477105.2">
    <property type="nucleotide sequence ID" value="NM_057757.4"/>
</dbReference>
<dbReference type="RefSeq" id="NP_726829.1">
    <property type="nucleotide sequence ID" value="NM_166951.2"/>
</dbReference>
<dbReference type="SMR" id="O76906"/>
<dbReference type="BioGRID" id="57799">
    <property type="interactions" value="12"/>
</dbReference>
<dbReference type="FunCoup" id="O76906">
    <property type="interactions" value="695"/>
</dbReference>
<dbReference type="IntAct" id="O76906">
    <property type="interactions" value="6"/>
</dbReference>
<dbReference type="STRING" id="7227.FBpp0070472"/>
<dbReference type="iPTMnet" id="O76906"/>
<dbReference type="PaxDb" id="7227-FBpp0070472"/>
<dbReference type="EnsemblMetazoa" id="FBtr0070495">
    <property type="protein sequence ID" value="FBpp0070472"/>
    <property type="gene ID" value="FBgn0000376"/>
</dbReference>
<dbReference type="EnsemblMetazoa" id="FBtr0070496">
    <property type="protein sequence ID" value="FBpp0070473"/>
    <property type="gene ID" value="FBgn0000376"/>
</dbReference>
<dbReference type="GeneID" id="31268"/>
<dbReference type="KEGG" id="dme:Dmel_CG2714"/>
<dbReference type="AGR" id="FB:FBgn0000376"/>
<dbReference type="CTD" id="109545"/>
<dbReference type="FlyBase" id="FBgn0000376">
    <property type="gene designation" value="crm"/>
</dbReference>
<dbReference type="VEuPathDB" id="VectorBase:FBgn0000376"/>
<dbReference type="eggNOG" id="KOG4468">
    <property type="taxonomic scope" value="Eukaryota"/>
</dbReference>
<dbReference type="GeneTree" id="ENSGT00390000003337"/>
<dbReference type="HOGENOM" id="CLU_311066_0_0_1"/>
<dbReference type="InParanoid" id="O76906"/>
<dbReference type="OrthoDB" id="515799at2759"/>
<dbReference type="PhylomeDB" id="O76906"/>
<dbReference type="BioGRID-ORCS" id="31268">
    <property type="hits" value="0 hits in 1 CRISPR screen"/>
</dbReference>
<dbReference type="CD-CODE" id="58FDC23F">
    <property type="entry name" value="PcG body"/>
</dbReference>
<dbReference type="GenomeRNAi" id="31268"/>
<dbReference type="PRO" id="PR:O76906"/>
<dbReference type="Proteomes" id="UP000000803">
    <property type="component" value="Chromosome X"/>
</dbReference>
<dbReference type="Bgee" id="FBgn0000376">
    <property type="expression patterns" value="Expressed in cleaving embryo and 61 other cell types or tissues"/>
</dbReference>
<dbReference type="GO" id="GO:0005634">
    <property type="term" value="C:nucleus"/>
    <property type="evidence" value="ECO:0000314"/>
    <property type="project" value="UniProtKB"/>
</dbReference>
<dbReference type="GO" id="GO:0003682">
    <property type="term" value="F:chromatin binding"/>
    <property type="evidence" value="ECO:0000314"/>
    <property type="project" value="FlyBase"/>
</dbReference>
<dbReference type="GO" id="GO:0003677">
    <property type="term" value="F:DNA binding"/>
    <property type="evidence" value="ECO:0000303"/>
    <property type="project" value="UniProtKB"/>
</dbReference>
<dbReference type="GO" id="GO:0007389">
    <property type="term" value="P:pattern specification process"/>
    <property type="evidence" value="ECO:0000318"/>
    <property type="project" value="GO_Central"/>
</dbReference>
<dbReference type="GO" id="GO:0006355">
    <property type="term" value="P:regulation of DNA-templated transcription"/>
    <property type="evidence" value="ECO:0000303"/>
    <property type="project" value="UniProtKB"/>
</dbReference>
<dbReference type="GO" id="GO:0007379">
    <property type="term" value="P:segment specification"/>
    <property type="evidence" value="ECO:0000315"/>
    <property type="project" value="UniProtKB"/>
</dbReference>
<dbReference type="CDD" id="cd00167">
    <property type="entry name" value="SANT"/>
    <property type="match status" value="1"/>
</dbReference>
<dbReference type="Gene3D" id="1.10.10.60">
    <property type="entry name" value="Homeodomain-like"/>
    <property type="match status" value="1"/>
</dbReference>
<dbReference type="InterPro" id="IPR055315">
    <property type="entry name" value="Cramped-like"/>
</dbReference>
<dbReference type="InterPro" id="IPR001005">
    <property type="entry name" value="SANT/Myb"/>
</dbReference>
<dbReference type="PANTHER" id="PTHR21677">
    <property type="entry name" value="CRAMPED PROTEIN"/>
    <property type="match status" value="1"/>
</dbReference>
<dbReference type="PANTHER" id="PTHR21677:SF1">
    <property type="entry name" value="PROTEIN CRAMPED-LIKE"/>
    <property type="match status" value="1"/>
</dbReference>
<dbReference type="SMART" id="SM00717">
    <property type="entry name" value="SANT"/>
    <property type="match status" value="1"/>
</dbReference>
<accession>O76906</accession>
<accession>Q0KHW5</accession>
<accession>Q8MM10</accession>
<accession>Q8MM41</accession>
<accession>Q8MM71</accession>
<accession>Q8MX89</accession>
<accession>Q8MX90</accession>
<accession>Q8MX91</accession>
<accession>Q8MX92</accession>
<accession>Q8MX93</accession>
<accession>Q8MX94</accession>
<accession>Q8MX95</accession>
<accession>Q9W4V7</accession>
<evidence type="ECO:0000256" key="1">
    <source>
        <dbReference type="SAM" id="MobiDB-lite"/>
    </source>
</evidence>
<evidence type="ECO:0000269" key="2">
    <source>
    </source>
</evidence>
<evidence type="ECO:0000269" key="3">
    <source>
    </source>
</evidence>
<evidence type="ECO:0000305" key="4"/>
<keyword id="KW-0217">Developmental protein</keyword>
<keyword id="KW-0238">DNA-binding</keyword>
<keyword id="KW-0539">Nucleus</keyword>
<keyword id="KW-0597">Phosphoprotein</keyword>
<keyword id="KW-1185">Reference proteome</keyword>
<keyword id="KW-0804">Transcription</keyword>
<keyword id="KW-0805">Transcription regulation</keyword>